<name>CCNQ_HUMAN</name>
<proteinExistence type="evidence at protein level"/>
<keyword id="KW-0007">Acetylation</keyword>
<keyword id="KW-0025">Alternative splicing</keyword>
<keyword id="KW-0195">Cyclin</keyword>
<keyword id="KW-1267">Proteomics identification</keyword>
<keyword id="KW-1185">Reference proteome</keyword>
<dbReference type="EMBL" id="BC001909">
    <property type="protein sequence ID" value="AAH01909.4"/>
    <property type="status" value="ALT_INIT"/>
    <property type="molecule type" value="mRNA"/>
</dbReference>
<dbReference type="EMBL" id="BC007232">
    <property type="protein sequence ID" value="AAH07232.4"/>
    <property type="status" value="ALT_INIT"/>
    <property type="molecule type" value="mRNA"/>
</dbReference>
<dbReference type="EMBL" id="BC032121">
    <property type="protein sequence ID" value="AAH32121.1"/>
    <property type="status" value="ALT_INIT"/>
    <property type="molecule type" value="mRNA"/>
</dbReference>
<dbReference type="EMBL" id="BC071851">
    <property type="protein sequence ID" value="AAH71851.1"/>
    <property type="status" value="ALT_INIT"/>
    <property type="molecule type" value="mRNA"/>
</dbReference>
<dbReference type="EMBL" id="DQ323993">
    <property type="protein sequence ID" value="ABC88595.1"/>
    <property type="molecule type" value="mRNA"/>
</dbReference>
<dbReference type="EMBL" id="AY445048">
    <property type="protein sequence ID" value="AAS20614.1"/>
    <property type="molecule type" value="mRNA"/>
</dbReference>
<dbReference type="CCDS" id="CCDS76054.1">
    <molecule id="Q8N1B3-2"/>
</dbReference>
<dbReference type="RefSeq" id="NP_001124469.1">
    <molecule id="Q8N1B3-2"/>
    <property type="nucleotide sequence ID" value="NM_001130997.3"/>
</dbReference>
<dbReference type="RefSeq" id="NP_689487.2">
    <molecule id="Q8N1B3-1"/>
    <property type="nucleotide sequence ID" value="NM_152274.5"/>
</dbReference>
<dbReference type="SMR" id="Q8N1B3"/>
<dbReference type="BioGRID" id="124901">
    <property type="interactions" value="21"/>
</dbReference>
<dbReference type="ComplexPortal" id="CPX-326">
    <property type="entry name" value="Cyclin M-CDK10 complex"/>
</dbReference>
<dbReference type="CORUM" id="Q8N1B3"/>
<dbReference type="FunCoup" id="Q8N1B3">
    <property type="interactions" value="604"/>
</dbReference>
<dbReference type="IntAct" id="Q8N1B3">
    <property type="interactions" value="18"/>
</dbReference>
<dbReference type="MINT" id="Q8N1B3"/>
<dbReference type="STRING" id="9606.ENSP00000402949"/>
<dbReference type="iPTMnet" id="Q8N1B3"/>
<dbReference type="PhosphoSitePlus" id="Q8N1B3"/>
<dbReference type="BioMuta" id="CCNQ"/>
<dbReference type="DMDM" id="156630447"/>
<dbReference type="jPOST" id="Q8N1B3"/>
<dbReference type="MassIVE" id="Q8N1B3"/>
<dbReference type="PaxDb" id="9606-ENSP00000402949"/>
<dbReference type="PeptideAtlas" id="Q8N1B3"/>
<dbReference type="ProteomicsDB" id="71580">
    <molecule id="Q8N1B3-1"/>
</dbReference>
<dbReference type="ProteomicsDB" id="71581">
    <molecule id="Q8N1B3-2"/>
</dbReference>
<dbReference type="Pumba" id="Q8N1B3"/>
<dbReference type="Antibodypedia" id="73523">
    <property type="antibodies" value="24 antibodies from 11 providers"/>
</dbReference>
<dbReference type="DNASU" id="92002"/>
<dbReference type="Ensembl" id="ENST00000440428.5">
    <molecule id="Q8N1B3-2"/>
    <property type="protein sequence ID" value="ENSP00000402949.2"/>
    <property type="gene ID" value="ENSG00000262919.8"/>
</dbReference>
<dbReference type="Ensembl" id="ENST00000576892.8">
    <molecule id="Q8N1B3-1"/>
    <property type="protein sequence ID" value="ENSP00000461135.1"/>
    <property type="gene ID" value="ENSG00000262919.8"/>
</dbReference>
<dbReference type="GeneID" id="92002"/>
<dbReference type="KEGG" id="hsa:92002"/>
<dbReference type="MANE-Select" id="ENST00000576892.8">
    <property type="protein sequence ID" value="ENSP00000461135.1"/>
    <property type="RefSeq nucleotide sequence ID" value="NM_152274.5"/>
    <property type="RefSeq protein sequence ID" value="NP_689487.2"/>
</dbReference>
<dbReference type="UCSC" id="uc033fat.2">
    <molecule id="Q8N1B3-1"/>
    <property type="organism name" value="human"/>
</dbReference>
<dbReference type="AGR" id="HGNC:28434"/>
<dbReference type="CTD" id="92002"/>
<dbReference type="DisGeNET" id="92002"/>
<dbReference type="GeneCards" id="CCNQ"/>
<dbReference type="HGNC" id="HGNC:28434">
    <property type="gene designation" value="CCNQ"/>
</dbReference>
<dbReference type="HPA" id="ENSG00000262919">
    <property type="expression patterns" value="Low tissue specificity"/>
</dbReference>
<dbReference type="MalaCards" id="CCNQ"/>
<dbReference type="MIM" id="300707">
    <property type="type" value="phenotype"/>
</dbReference>
<dbReference type="MIM" id="300708">
    <property type="type" value="gene"/>
</dbReference>
<dbReference type="neXtProt" id="NX_Q8N1B3"/>
<dbReference type="OpenTargets" id="ENSG00000262919"/>
<dbReference type="Orphanet" id="140952">
    <property type="disease" value="Syndactyly-telecanthus-anogenital and renal malformations syndrome"/>
</dbReference>
<dbReference type="PharmGKB" id="PA142671863"/>
<dbReference type="VEuPathDB" id="HostDB:ENSG00000262919"/>
<dbReference type="eggNOG" id="KOG0834">
    <property type="taxonomic scope" value="Eukaryota"/>
</dbReference>
<dbReference type="GeneTree" id="ENSGT00940000155445"/>
<dbReference type="HOGENOM" id="CLU_022000_2_0_1"/>
<dbReference type="InParanoid" id="Q8N1B3"/>
<dbReference type="OMA" id="MYDMMKY"/>
<dbReference type="OrthoDB" id="79090at2759"/>
<dbReference type="PAN-GO" id="Q8N1B3">
    <property type="GO annotations" value="3 GO annotations based on evolutionary models"/>
</dbReference>
<dbReference type="PhylomeDB" id="Q8N1B3"/>
<dbReference type="PathwayCommons" id="Q8N1B3"/>
<dbReference type="SignaLink" id="Q8N1B3"/>
<dbReference type="BioGRID-ORCS" id="92002">
    <property type="hits" value="29 hits in 224 CRISPR screens"/>
</dbReference>
<dbReference type="ChiTaRS" id="FAM58A">
    <property type="organism name" value="human"/>
</dbReference>
<dbReference type="GenomeRNAi" id="92002"/>
<dbReference type="Pharos" id="Q8N1B3">
    <property type="development level" value="Tdark"/>
</dbReference>
<dbReference type="PRO" id="PR:Q8N1B3"/>
<dbReference type="Proteomes" id="UP000005640">
    <property type="component" value="Chromosome X"/>
</dbReference>
<dbReference type="RNAct" id="Q8N1B3">
    <property type="molecule type" value="protein"/>
</dbReference>
<dbReference type="Bgee" id="ENSG00000262919">
    <property type="expression patterns" value="Expressed in tendon of biceps brachii and 182 other cell types or tissues"/>
</dbReference>
<dbReference type="ExpressionAtlas" id="Q8N1B3">
    <property type="expression patterns" value="baseline and differential"/>
</dbReference>
<dbReference type="GO" id="GO:0000307">
    <property type="term" value="C:cyclin-dependent protein kinase holoenzyme complex"/>
    <property type="evidence" value="ECO:0000353"/>
    <property type="project" value="ComplexPortal"/>
</dbReference>
<dbReference type="GO" id="GO:0005634">
    <property type="term" value="C:nucleus"/>
    <property type="evidence" value="ECO:0000318"/>
    <property type="project" value="GO_Central"/>
</dbReference>
<dbReference type="GO" id="GO:0016538">
    <property type="term" value="F:cyclin-dependent protein serine/threonine kinase regulator activity"/>
    <property type="evidence" value="ECO:0000318"/>
    <property type="project" value="GO_Central"/>
</dbReference>
<dbReference type="GO" id="GO:1902749">
    <property type="term" value="P:regulation of cell cycle G2/M phase transition"/>
    <property type="evidence" value="ECO:0000314"/>
    <property type="project" value="ComplexPortal"/>
</dbReference>
<dbReference type="GO" id="GO:0006357">
    <property type="term" value="P:regulation of transcription by RNA polymerase II"/>
    <property type="evidence" value="ECO:0007669"/>
    <property type="project" value="InterPro"/>
</dbReference>
<dbReference type="CDD" id="cd20534">
    <property type="entry name" value="CYCLIN_CCNM_CCNQ_rpt1"/>
    <property type="match status" value="1"/>
</dbReference>
<dbReference type="CDD" id="cd20535">
    <property type="entry name" value="CYCLIN_CCNM_CCNQ_rpt2"/>
    <property type="match status" value="1"/>
</dbReference>
<dbReference type="FunFam" id="1.10.472.10:FF:000071">
    <property type="entry name" value="cyclin-related protein FAM58A isoform X1"/>
    <property type="match status" value="1"/>
</dbReference>
<dbReference type="FunFam" id="1.10.472.10:FF:000042">
    <property type="entry name" value="FAM58A isoform 1"/>
    <property type="match status" value="1"/>
</dbReference>
<dbReference type="Gene3D" id="1.10.472.10">
    <property type="entry name" value="Cyclin-like"/>
    <property type="match status" value="2"/>
</dbReference>
<dbReference type="InterPro" id="IPR013763">
    <property type="entry name" value="Cyclin-like_dom"/>
</dbReference>
<dbReference type="InterPro" id="IPR036915">
    <property type="entry name" value="Cyclin-like_sf"/>
</dbReference>
<dbReference type="InterPro" id="IPR048055">
    <property type="entry name" value="Cyclin-Q_first_cyclin_box"/>
</dbReference>
<dbReference type="InterPro" id="IPR048053">
    <property type="entry name" value="Cyclin-Q_second_cyclin_box"/>
</dbReference>
<dbReference type="InterPro" id="IPR043198">
    <property type="entry name" value="Cyclin/Ssn8"/>
</dbReference>
<dbReference type="InterPro" id="IPR006671">
    <property type="entry name" value="Cyclin_N"/>
</dbReference>
<dbReference type="PANTHER" id="PTHR10026">
    <property type="entry name" value="CYCLIN"/>
    <property type="match status" value="1"/>
</dbReference>
<dbReference type="Pfam" id="PF00134">
    <property type="entry name" value="Cyclin_N"/>
    <property type="match status" value="1"/>
</dbReference>
<dbReference type="PIRSF" id="PIRSF028758">
    <property type="entry name" value="Cyclin, C/H/G types"/>
    <property type="match status" value="1"/>
</dbReference>
<dbReference type="SMART" id="SM00385">
    <property type="entry name" value="CYCLIN"/>
    <property type="match status" value="2"/>
</dbReference>
<dbReference type="SUPFAM" id="SSF47954">
    <property type="entry name" value="Cyclin-like"/>
    <property type="match status" value="2"/>
</dbReference>
<evidence type="ECO:0000256" key="1">
    <source>
        <dbReference type="SAM" id="MobiDB-lite"/>
    </source>
</evidence>
<evidence type="ECO:0000269" key="2">
    <source>
    </source>
</evidence>
<evidence type="ECO:0000269" key="3">
    <source>
    </source>
</evidence>
<evidence type="ECO:0000269" key="4">
    <source>
    </source>
</evidence>
<evidence type="ECO:0000303" key="5">
    <source ref="2"/>
</evidence>
<evidence type="ECO:0000305" key="6"/>
<evidence type="ECO:0000312" key="7">
    <source>
        <dbReference type="HGNC" id="HGNC:28434"/>
    </source>
</evidence>
<evidence type="ECO:0007744" key="8">
    <source>
    </source>
</evidence>
<evidence type="ECO:0007744" key="9">
    <source>
    </source>
</evidence>
<comment type="function">
    <text evidence="3 4">Activating cyclin for the cyclin-associated kinase CDK10.</text>
</comment>
<comment type="subunit">
    <text evidence="3 4">Associates with CDK10 to promote its kinase activity. Interacts with SALL1.</text>
</comment>
<comment type="interaction">
    <interactant intactId="EBI-3925043">
        <id>Q8N1B3</id>
    </interactant>
    <interactant intactId="EBI-11507283">
        <id>Q15131-1</id>
        <label>CDK10</label>
    </interactant>
    <organismsDiffer>false</organismsDiffer>
    <experiments>7</experiments>
</comment>
<comment type="alternative products">
    <event type="alternative splicing"/>
    <isoform>
        <id>Q8N1B3-1</id>
        <name>1</name>
        <sequence type="displayed"/>
    </isoform>
    <isoform>
        <id>Q8N1B3-2</id>
        <name>2</name>
        <sequence type="described" ref="VSP_034527"/>
    </isoform>
</comment>
<comment type="disease" evidence="3">
    <disease id="DI-02373">
        <name>Toe syndactyly, telecanthus, and anogenital and renal malformations</name>
        <acronym>STAR</acronym>
        <description>A syndrome characterized by anal, genital and renal tract anomalies, facial dysmorphism and syndactyly. Features include anal stenosis, a rectovaginal fistula, clitoral hypertrophy, a pelvic right kidney, toe syndactyly, and telecanthus.</description>
        <dbReference type="MIM" id="300707"/>
    </disease>
    <text>The disease is caused by variants affecting the gene represented in this entry.</text>
</comment>
<comment type="miscellaneous">
    <text>Silencing with siRNAs phenocopies CDK10 silencing in increasing c-Raf and in conferring tamoxifen resistance to breast cancer cells.</text>
</comment>
<comment type="similarity">
    <text evidence="6">Belongs to the cyclin family. Cyclin-like FAM58 subfamily.</text>
</comment>
<comment type="sequence caution" evidence="6">
    <conflict type="erroneous initiation">
        <sequence resource="EMBL-CDS" id="AAH01909"/>
    </conflict>
</comment>
<comment type="sequence caution" evidence="6">
    <conflict type="erroneous initiation">
        <sequence resource="EMBL-CDS" id="AAH07232"/>
    </conflict>
</comment>
<comment type="sequence caution" evidence="6">
    <conflict type="erroneous initiation">
        <sequence resource="EMBL-CDS" id="AAH32121"/>
    </conflict>
</comment>
<comment type="sequence caution" evidence="6">
    <conflict type="erroneous initiation">
        <sequence resource="EMBL-CDS" id="AAH71851"/>
    </conflict>
</comment>
<feature type="chain" id="PRO_0000297567" description="Cyclin-Q">
    <location>
        <begin position="1"/>
        <end position="248"/>
    </location>
</feature>
<feature type="region of interest" description="Disordered" evidence="1">
    <location>
        <begin position="1"/>
        <end position="21"/>
    </location>
</feature>
<feature type="compositionally biased region" description="Gly residues" evidence="1">
    <location>
        <begin position="1"/>
        <end position="12"/>
    </location>
</feature>
<feature type="modified residue" description="N-acetylmethionine" evidence="8 9">
    <location>
        <position position="1"/>
    </location>
</feature>
<feature type="splice variant" id="VSP_034527" description="In isoform 2." evidence="5">
    <location>
        <begin position="219"/>
        <end position="238"/>
    </location>
</feature>
<feature type="sequence variant" id="VAR_034642" description="In dbSNP:rs17850173." evidence="2">
    <original>C</original>
    <variation>S</variation>
    <location>
        <position position="183"/>
    </location>
</feature>
<gene>
    <name evidence="7" type="primary">CCNQ</name>
    <name type="synonym">FAM58A</name>
</gene>
<sequence length="248" mass="28369">MEAPEGGGGGPAARGPEGQPAPEARVHFRVARFIMEAGVKLGMRSIPIATACTIYHKFFCETNLDAYDPYLIAMSSIYLAGKVEEQHLRTRDIINVSNRYFNPSGEPLELDSRFWELRDSIVQCELLMLRVLRFQVSFQHPHKYLLHYLVSLQNWLNRHSWQRTPVAVTAWALLRDSYHGALCLRFQAQHIAVAVLYLALQVYGVEVPAEVEAEKPWWQVFNDDLTKPIIDNIVSDLIQIYTMDTEIP</sequence>
<reference key="1">
    <citation type="journal article" date="2004" name="Genome Res.">
        <title>The status, quality, and expansion of the NIH full-length cDNA project: the Mammalian Gene Collection (MGC).</title>
        <authorList>
            <consortium name="The MGC Project Team"/>
        </authorList>
    </citation>
    <scope>NUCLEOTIDE SEQUENCE [LARGE SCALE MRNA] (ISOFORM 1)</scope>
    <scope>VARIANT SER-183</scope>
    <source>
        <tissue>B-cell</tissue>
        <tissue>Blood</tissue>
        <tissue>Kidney</tissue>
        <tissue>Lung</tissue>
    </source>
</reference>
<reference key="2">
    <citation type="submission" date="2005-12" db="EMBL/GenBank/DDBJ databases">
        <authorList>
            <person name="Lin L."/>
            <person name="Nong W."/>
            <person name="Zhou G."/>
            <person name="Ke R."/>
            <person name="Shen C."/>
            <person name="Zhong G."/>
            <person name="Liang M."/>
            <person name="Tang Z."/>
            <person name="Huang B."/>
            <person name="Li H."/>
            <person name="Yang S."/>
        </authorList>
    </citation>
    <scope>NUCLEOTIDE SEQUENCE [MRNA] OF 35-228 (ISOFORM 2)</scope>
</reference>
<reference key="3">
    <citation type="submission" date="2003-10" db="EMBL/GenBank/DDBJ databases">
        <title>Cyclin M.</title>
        <authorList>
            <person name="Johne C."/>
            <person name="Tschop K."/>
            <person name="Engeland K."/>
        </authorList>
    </citation>
    <scope>NUCLEOTIDE SEQUENCE [MRNA] OF 52-130 (ISOFORM 1)</scope>
</reference>
<reference key="4">
    <citation type="journal article" date="2008" name="Nat. Genet.">
        <title>Mutations in the cyclin family member FAM58A cause an X-linked dominant disorder characterized by syndactyly, telecanthus and anogenital and renal malformations.</title>
        <authorList>
            <person name="Unger S."/>
            <person name="Boehm D."/>
            <person name="Kaiser F.J."/>
            <person name="Kaulfuss S."/>
            <person name="Borozdin W."/>
            <person name="Buiting K."/>
            <person name="Burfeind P."/>
            <person name="Boehm J."/>
            <person name="Barrionuevo F."/>
            <person name="Craig A."/>
            <person name="Borowski K."/>
            <person name="Keppler-Noreuil K."/>
            <person name="Schmitt-Mechelke T."/>
            <person name="Steiner B."/>
            <person name="Bartholdi D."/>
            <person name="Lemke J."/>
            <person name="Mortier G."/>
            <person name="Sandford R."/>
            <person name="Zabel B."/>
            <person name="Superti-Furga A."/>
            <person name="Kohlhase J."/>
        </authorList>
    </citation>
    <scope>FUNCTION</scope>
    <scope>INTERACTION WITH SALL1</scope>
    <scope>INVOLVEMENT IN STAR</scope>
</reference>
<reference key="5">
    <citation type="journal article" date="2009" name="Anal. Chem.">
        <title>Lys-N and trypsin cover complementary parts of the phosphoproteome in a refined SCX-based approach.</title>
        <authorList>
            <person name="Gauci S."/>
            <person name="Helbig A.O."/>
            <person name="Slijper M."/>
            <person name="Krijgsveld J."/>
            <person name="Heck A.J."/>
            <person name="Mohammed S."/>
        </authorList>
    </citation>
    <scope>ACETYLATION [LARGE SCALE ANALYSIS] AT MET-1</scope>
    <scope>IDENTIFICATION BY MASS SPECTROMETRY [LARGE SCALE ANALYSIS]</scope>
</reference>
<reference key="6">
    <citation type="journal article" date="2012" name="Proc. Natl. Acad. Sci. U.S.A.">
        <title>N-terminal acetylome analyses and functional insights of the N-terminal acetyltransferase NatB.</title>
        <authorList>
            <person name="Van Damme P."/>
            <person name="Lasa M."/>
            <person name="Polevoda B."/>
            <person name="Gazquez C."/>
            <person name="Elosegui-Artola A."/>
            <person name="Kim D.S."/>
            <person name="De Juan-Pardo E."/>
            <person name="Demeyer K."/>
            <person name="Hole K."/>
            <person name="Larrea E."/>
            <person name="Timmerman E."/>
            <person name="Prieto J."/>
            <person name="Arnesen T."/>
            <person name="Sherman F."/>
            <person name="Gevaert K."/>
            <person name="Aldabe R."/>
        </authorList>
    </citation>
    <scope>ACETYLATION [LARGE SCALE ANALYSIS] AT MET-1</scope>
    <scope>IDENTIFICATION BY MASS SPECTROMETRY [LARGE SCALE ANALYSIS]</scope>
</reference>
<reference key="7">
    <citation type="journal article" date="2013" name="Proc. Natl. Acad. Sci. U.S.A.">
        <title>CDK10/cyclin M is a protein kinase that controls ETS2 degradation and is deficient in STAR syndrome.</title>
        <authorList>
            <person name="Guen V.J."/>
            <person name="Gamble C."/>
            <person name="Flajolet M."/>
            <person name="Unger S."/>
            <person name="Thollet A."/>
            <person name="Ferandin Y."/>
            <person name="Superti-Furga A."/>
            <person name="Cohen P.A."/>
            <person name="Meijer L."/>
            <person name="Colas P."/>
        </authorList>
    </citation>
    <scope>FUNCTION</scope>
    <scope>MISCELLANEOUS</scope>
    <scope>INTERACTION WITH CDK10</scope>
</reference>
<protein>
    <recommendedName>
        <fullName>Cyclin-Q</fullName>
    </recommendedName>
    <alternativeName>
        <fullName>CDK10-activating cyclin</fullName>
    </alternativeName>
    <alternativeName>
        <fullName>Cyclin-M</fullName>
    </alternativeName>
    <alternativeName>
        <fullName>Cyclin-related protein FAM58A</fullName>
    </alternativeName>
</protein>
<organism>
    <name type="scientific">Homo sapiens</name>
    <name type="common">Human</name>
    <dbReference type="NCBI Taxonomy" id="9606"/>
    <lineage>
        <taxon>Eukaryota</taxon>
        <taxon>Metazoa</taxon>
        <taxon>Chordata</taxon>
        <taxon>Craniata</taxon>
        <taxon>Vertebrata</taxon>
        <taxon>Euteleostomi</taxon>
        <taxon>Mammalia</taxon>
        <taxon>Eutheria</taxon>
        <taxon>Euarchontoglires</taxon>
        <taxon>Primates</taxon>
        <taxon>Haplorrhini</taxon>
        <taxon>Catarrhini</taxon>
        <taxon>Hominidae</taxon>
        <taxon>Homo</taxon>
    </lineage>
</organism>
<accession>Q8N1B3</accession>
<accession>Q2I380</accession>
<accession>Q330J9</accession>
<accession>Q96IU5</accession>
<accession>Q9BUU1</accession>